<organism>
    <name type="scientific">Streptococcus mutans serotype c (strain ATCC 700610 / UA159)</name>
    <dbReference type="NCBI Taxonomy" id="210007"/>
    <lineage>
        <taxon>Bacteria</taxon>
        <taxon>Bacillati</taxon>
        <taxon>Bacillota</taxon>
        <taxon>Bacilli</taxon>
        <taxon>Lactobacillales</taxon>
        <taxon>Streptococcaceae</taxon>
        <taxon>Streptococcus</taxon>
    </lineage>
</organism>
<sequence length="110" mass="12985">MDKKDLFDVFDGFSQNLMETLAEAEALKKQVQDLVEQNASLRLENDKLRDRLSHFSQMEESDPSSKAISSRKENLENIYEDGFHICTFFYGQRRENNEDCAFCMELLYRE</sequence>
<evidence type="ECO:0000255" key="1">
    <source>
        <dbReference type="HAMAP-Rule" id="MF_01159"/>
    </source>
</evidence>
<proteinExistence type="inferred from homology"/>
<keyword id="KW-0963">Cytoplasm</keyword>
<keyword id="KW-0235">DNA replication</keyword>
<keyword id="KW-0236">DNA replication inhibitor</keyword>
<keyword id="KW-0479">Metal-binding</keyword>
<keyword id="KW-1185">Reference proteome</keyword>
<keyword id="KW-0862">Zinc</keyword>
<name>YABA_STRMU</name>
<feature type="chain" id="PRO_0000211926" description="Replication initiation control protein YabA">
    <location>
        <begin position="1"/>
        <end position="110"/>
    </location>
</feature>
<feature type="binding site" evidence="1">
    <location>
        <position position="84"/>
    </location>
    <ligand>
        <name>Zn(2+)</name>
        <dbReference type="ChEBI" id="CHEBI:29105"/>
    </ligand>
</feature>
<feature type="binding site" evidence="1">
    <location>
        <position position="86"/>
    </location>
    <ligand>
        <name>Zn(2+)</name>
        <dbReference type="ChEBI" id="CHEBI:29105"/>
    </ligand>
</feature>
<feature type="binding site" evidence="1">
    <location>
        <position position="100"/>
    </location>
    <ligand>
        <name>Zn(2+)</name>
        <dbReference type="ChEBI" id="CHEBI:29105"/>
    </ligand>
</feature>
<feature type="binding site" evidence="1">
    <location>
        <position position="103"/>
    </location>
    <ligand>
        <name>Zn(2+)</name>
        <dbReference type="ChEBI" id="CHEBI:29105"/>
    </ligand>
</feature>
<comment type="function">
    <text evidence="1">Involved in control of chromosome replication initiation. Inhibits the cooperative binding of DnaA to the oriC region, thus negatively regulating initiation of chromosome replication. Inhibits the ability of DnaA-ATP to form a helix on DNA; does not disassemble preformed DnaA-DNA helices. Decreases the residence time of DnaA on the chromosome at its binding sites (oriC, replication forks and promoter-binding sites). Tethers DnaA to the replication machinery via the DNA polymerase beta sliding clamp subunit (dnaN). Associates with oriC and other DnaA targets on the chromosome in a DnaA-dependent manner.</text>
</comment>
<comment type="cofactor">
    <cofactor evidence="1">
        <name>Zn(2+)</name>
        <dbReference type="ChEBI" id="CHEBI:29105"/>
    </cofactor>
    <text evidence="1">Binds 1 zinc ion per subunit.</text>
</comment>
<comment type="subunit">
    <text evidence="1">Homotetramer. Interacts with both DnaA and DnaN, acting as a bridge between these two proteins.</text>
</comment>
<comment type="subcellular location">
    <subcellularLocation>
        <location evidence="1">Cytoplasm</location>
        <location evidence="1">Nucleoid</location>
    </subcellularLocation>
    <text evidence="1">Localizes in tight foci, which correspond to the replisome at mid-cell throughout the cell cycle.</text>
</comment>
<comment type="similarity">
    <text evidence="1">Belongs to the YabA family.</text>
</comment>
<protein>
    <recommendedName>
        <fullName evidence="1">Replication initiation control protein YabA</fullName>
    </recommendedName>
</protein>
<gene>
    <name evidence="1" type="primary">yabA</name>
    <name type="ordered locus">SMU_1660c</name>
</gene>
<dbReference type="EMBL" id="AE014133">
    <property type="protein sequence ID" value="AAN59299.1"/>
    <property type="molecule type" value="Genomic_DNA"/>
</dbReference>
<dbReference type="RefSeq" id="NP_721993.1">
    <property type="nucleotide sequence ID" value="NC_004350.2"/>
</dbReference>
<dbReference type="RefSeq" id="WP_002262684.1">
    <property type="nucleotide sequence ID" value="NC_004350.2"/>
</dbReference>
<dbReference type="SMR" id="Q8DSU9"/>
<dbReference type="STRING" id="210007.SMU_1660c"/>
<dbReference type="DNASU" id="1028892"/>
<dbReference type="KEGG" id="smu:SMU_1660c"/>
<dbReference type="PATRIC" id="fig|210007.7.peg.1482"/>
<dbReference type="eggNOG" id="COG4467">
    <property type="taxonomic scope" value="Bacteria"/>
</dbReference>
<dbReference type="HOGENOM" id="CLU_157169_0_0_9"/>
<dbReference type="OrthoDB" id="2112130at2"/>
<dbReference type="PhylomeDB" id="Q8DSU9"/>
<dbReference type="Proteomes" id="UP000002512">
    <property type="component" value="Chromosome"/>
</dbReference>
<dbReference type="GO" id="GO:0009295">
    <property type="term" value="C:nucleoid"/>
    <property type="evidence" value="ECO:0007669"/>
    <property type="project" value="UniProtKB-SubCell"/>
</dbReference>
<dbReference type="GO" id="GO:0006260">
    <property type="term" value="P:DNA replication"/>
    <property type="evidence" value="ECO:0007669"/>
    <property type="project" value="UniProtKB-UniRule"/>
</dbReference>
<dbReference type="HAMAP" id="MF_01159">
    <property type="entry name" value="YabA"/>
    <property type="match status" value="1"/>
</dbReference>
<dbReference type="InterPro" id="IPR010377">
    <property type="entry name" value="YabA"/>
</dbReference>
<dbReference type="NCBIfam" id="NF009640">
    <property type="entry name" value="PRK13169.1-1"/>
    <property type="match status" value="1"/>
</dbReference>
<dbReference type="Pfam" id="PF06156">
    <property type="entry name" value="YabA"/>
    <property type="match status" value="1"/>
</dbReference>
<dbReference type="PIRSF" id="PIRSF021439">
    <property type="entry name" value="DUF972"/>
    <property type="match status" value="1"/>
</dbReference>
<dbReference type="SUPFAM" id="SSF58026">
    <property type="entry name" value="Delta-sleep-inducing peptide immunoreactive peptide"/>
    <property type="match status" value="1"/>
</dbReference>
<reference key="1">
    <citation type="journal article" date="2002" name="Proc. Natl. Acad. Sci. U.S.A.">
        <title>Genome sequence of Streptococcus mutans UA159, a cariogenic dental pathogen.</title>
        <authorList>
            <person name="Ajdic D.J."/>
            <person name="McShan W.M."/>
            <person name="McLaughlin R.E."/>
            <person name="Savic G."/>
            <person name="Chang J."/>
            <person name="Carson M.B."/>
            <person name="Primeaux C."/>
            <person name="Tian R."/>
            <person name="Kenton S."/>
            <person name="Jia H.G."/>
            <person name="Lin S.P."/>
            <person name="Qian Y."/>
            <person name="Li S."/>
            <person name="Zhu H."/>
            <person name="Najar F.Z."/>
            <person name="Lai H."/>
            <person name="White J."/>
            <person name="Roe B.A."/>
            <person name="Ferretti J.J."/>
        </authorList>
    </citation>
    <scope>NUCLEOTIDE SEQUENCE [LARGE SCALE GENOMIC DNA]</scope>
    <source>
        <strain>ATCC 700610 / UA159</strain>
    </source>
</reference>
<accession>Q8DSU9</accession>